<accession>Q08784</accession>
<reference key="1">
    <citation type="journal article" date="1993" name="Gene">
        <title>Cloning and sequencing the recA+ genes of Acetobacter polyoxogenes and Acetobacter aceti: construction of recA-mutants of by transformation-mediated gene replacement.</title>
        <authorList>
            <person name="Tayama K."/>
            <person name="Fukaya M."/>
            <person name="Takemura H."/>
            <person name="Okumura H."/>
            <person name="Kawamura Y."/>
            <person name="Horinouchi S."/>
            <person name="Beppu T."/>
        </authorList>
    </citation>
    <scope>NUCLEOTIDE SEQUENCE [GENOMIC DNA]</scope>
    <source>
        <strain>1023</strain>
    </source>
</reference>
<gene>
    <name type="primary">recA</name>
</gene>
<dbReference type="EMBL" id="S60630">
    <property type="protein sequence ID" value="AAD13915.1"/>
    <property type="molecule type" value="Genomic_DNA"/>
</dbReference>
<dbReference type="EMBL" id="D13184">
    <property type="protein sequence ID" value="BAA02479.1"/>
    <property type="molecule type" value="Genomic_DNA"/>
</dbReference>
<dbReference type="PIR" id="PN0541">
    <property type="entry name" value="PN0541"/>
</dbReference>
<dbReference type="SMR" id="Q08784"/>
<dbReference type="STRING" id="435.A0U92_00135"/>
<dbReference type="eggNOG" id="COG0468">
    <property type="taxonomic scope" value="Bacteria"/>
</dbReference>
<dbReference type="GO" id="GO:0005829">
    <property type="term" value="C:cytosol"/>
    <property type="evidence" value="ECO:0007669"/>
    <property type="project" value="TreeGrafter"/>
</dbReference>
<dbReference type="GO" id="GO:0005524">
    <property type="term" value="F:ATP binding"/>
    <property type="evidence" value="ECO:0007669"/>
    <property type="project" value="UniProtKB-KW"/>
</dbReference>
<dbReference type="GO" id="GO:0140664">
    <property type="term" value="F:ATP-dependent DNA damage sensor activity"/>
    <property type="evidence" value="ECO:0007669"/>
    <property type="project" value="InterPro"/>
</dbReference>
<dbReference type="GO" id="GO:0003697">
    <property type="term" value="F:single-stranded DNA binding"/>
    <property type="evidence" value="ECO:0007669"/>
    <property type="project" value="InterPro"/>
</dbReference>
<dbReference type="GO" id="GO:0006310">
    <property type="term" value="P:DNA recombination"/>
    <property type="evidence" value="ECO:0007669"/>
    <property type="project" value="UniProtKB-KW"/>
</dbReference>
<dbReference type="GO" id="GO:0006281">
    <property type="term" value="P:DNA repair"/>
    <property type="evidence" value="ECO:0007669"/>
    <property type="project" value="UniProtKB-KW"/>
</dbReference>
<dbReference type="GO" id="GO:0009432">
    <property type="term" value="P:SOS response"/>
    <property type="evidence" value="ECO:0007669"/>
    <property type="project" value="UniProtKB-KW"/>
</dbReference>
<dbReference type="CDD" id="cd00983">
    <property type="entry name" value="RecA"/>
    <property type="match status" value="1"/>
</dbReference>
<dbReference type="Gene3D" id="3.40.50.300">
    <property type="entry name" value="P-loop containing nucleotide triphosphate hydrolases"/>
    <property type="match status" value="1"/>
</dbReference>
<dbReference type="InterPro" id="IPR013765">
    <property type="entry name" value="DNA_recomb/repair_RecA"/>
</dbReference>
<dbReference type="InterPro" id="IPR020584">
    <property type="entry name" value="DNA_recomb/repair_RecA_CS"/>
</dbReference>
<dbReference type="InterPro" id="IPR027417">
    <property type="entry name" value="P-loop_NTPase"/>
</dbReference>
<dbReference type="InterPro" id="IPR049261">
    <property type="entry name" value="RecA-like_C"/>
</dbReference>
<dbReference type="InterPro" id="IPR049428">
    <property type="entry name" value="RecA-like_N"/>
</dbReference>
<dbReference type="InterPro" id="IPR020588">
    <property type="entry name" value="RecA_ATP-bd"/>
</dbReference>
<dbReference type="InterPro" id="IPR023400">
    <property type="entry name" value="RecA_C_sf"/>
</dbReference>
<dbReference type="InterPro" id="IPR020587">
    <property type="entry name" value="RecA_monomer-monomer_interface"/>
</dbReference>
<dbReference type="NCBIfam" id="TIGR02012">
    <property type="entry name" value="tigrfam_recA"/>
    <property type="match status" value="1"/>
</dbReference>
<dbReference type="PANTHER" id="PTHR45900:SF1">
    <property type="entry name" value="MITOCHONDRIAL DNA REPAIR PROTEIN RECA HOMOLOG-RELATED"/>
    <property type="match status" value="1"/>
</dbReference>
<dbReference type="PANTHER" id="PTHR45900">
    <property type="entry name" value="RECA"/>
    <property type="match status" value="1"/>
</dbReference>
<dbReference type="Pfam" id="PF00154">
    <property type="entry name" value="RecA"/>
    <property type="match status" value="1"/>
</dbReference>
<dbReference type="Pfam" id="PF21096">
    <property type="entry name" value="RecA_C"/>
    <property type="match status" value="1"/>
</dbReference>
<dbReference type="PRINTS" id="PR00142">
    <property type="entry name" value="RECA"/>
</dbReference>
<dbReference type="SUPFAM" id="SSF52540">
    <property type="entry name" value="P-loop containing nucleoside triphosphate hydrolases"/>
    <property type="match status" value="1"/>
</dbReference>
<dbReference type="SUPFAM" id="SSF54752">
    <property type="entry name" value="RecA protein, C-terminal domain"/>
    <property type="match status" value="1"/>
</dbReference>
<dbReference type="PROSITE" id="PS00321">
    <property type="entry name" value="RECA_1"/>
    <property type="match status" value="1"/>
</dbReference>
<dbReference type="PROSITE" id="PS50162">
    <property type="entry name" value="RECA_2"/>
    <property type="match status" value="1"/>
</dbReference>
<dbReference type="PROSITE" id="PS50163">
    <property type="entry name" value="RECA_3"/>
    <property type="match status" value="1"/>
</dbReference>
<feature type="chain" id="PRO_0000122629" description="Protein RecA">
    <location>
        <begin position="1" status="less than"/>
        <end position="182" status="greater than"/>
    </location>
</feature>
<feature type="non-terminal residue">
    <location>
        <position position="1"/>
    </location>
</feature>
<feature type="non-terminal residue">
    <location>
        <position position="182"/>
    </location>
</feature>
<sequence>VDNLLISQPDAGEQALEIADTLVRSGAVDVLVVDSVAALVPRAELEGDMGDSHVGLHARLMSQALRKLTGTVARSNTLMIFLNQIRLKIGVMFGNPETTTGGNALKFYSSVRMDIRRIGSIKDKDEVTGNQTRVKVVKNKMAPPFRQVEFDIMYGEGISKVGELIDLGVKAGVVEKSGAWFS</sequence>
<comment type="function">
    <text evidence="1">Can catalyze the hydrolysis of ATP in the presence of single-stranded DNA, the ATP-dependent uptake of single-stranded DNA by duplex DNA, and the ATP-dependent hybridization of homologous single-stranded DNAs. It interacts with LexA causing its activation and leading to its autocatalytic cleavage (By similarity).</text>
</comment>
<comment type="subcellular location">
    <subcellularLocation>
        <location evidence="1">Cytoplasm</location>
    </subcellularLocation>
</comment>
<comment type="similarity">
    <text evidence="2">Belongs to the RecA family.</text>
</comment>
<name>RECA_ACEAC</name>
<keyword id="KW-0067">ATP-binding</keyword>
<keyword id="KW-0963">Cytoplasm</keyword>
<keyword id="KW-0227">DNA damage</keyword>
<keyword id="KW-0233">DNA recombination</keyword>
<keyword id="KW-0234">DNA repair</keyword>
<keyword id="KW-0238">DNA-binding</keyword>
<keyword id="KW-0547">Nucleotide-binding</keyword>
<keyword id="KW-0742">SOS response</keyword>
<organism>
    <name type="scientific">Acetobacter aceti</name>
    <dbReference type="NCBI Taxonomy" id="435"/>
    <lineage>
        <taxon>Bacteria</taxon>
        <taxon>Pseudomonadati</taxon>
        <taxon>Pseudomonadota</taxon>
        <taxon>Alphaproteobacteria</taxon>
        <taxon>Acetobacterales</taxon>
        <taxon>Acetobacteraceae</taxon>
        <taxon>Acetobacter</taxon>
        <taxon>Acetobacter subgen. Acetobacter</taxon>
    </lineage>
</organism>
<proteinExistence type="inferred from homology"/>
<protein>
    <recommendedName>
        <fullName>Protein RecA</fullName>
    </recommendedName>
    <alternativeName>
        <fullName>Recombinase A</fullName>
    </alternativeName>
</protein>
<evidence type="ECO:0000250" key="1"/>
<evidence type="ECO:0000305" key="2"/>